<dbReference type="EC" id="2.1.1.166" evidence="1"/>
<dbReference type="EMBL" id="CP000269">
    <property type="protein sequence ID" value="ABR88403.1"/>
    <property type="molecule type" value="Genomic_DNA"/>
</dbReference>
<dbReference type="RefSeq" id="WP_012080091.1">
    <property type="nucleotide sequence ID" value="NC_009659.1"/>
</dbReference>
<dbReference type="SMR" id="A6T081"/>
<dbReference type="STRING" id="375286.mma_2238"/>
<dbReference type="KEGG" id="mms:mma_2238"/>
<dbReference type="eggNOG" id="COG0293">
    <property type="taxonomic scope" value="Bacteria"/>
</dbReference>
<dbReference type="HOGENOM" id="CLU_009422_4_1_4"/>
<dbReference type="OrthoDB" id="9790080at2"/>
<dbReference type="Proteomes" id="UP000006388">
    <property type="component" value="Chromosome"/>
</dbReference>
<dbReference type="GO" id="GO:0005737">
    <property type="term" value="C:cytoplasm"/>
    <property type="evidence" value="ECO:0007669"/>
    <property type="project" value="UniProtKB-SubCell"/>
</dbReference>
<dbReference type="GO" id="GO:0008650">
    <property type="term" value="F:rRNA (uridine-2'-O-)-methyltransferase activity"/>
    <property type="evidence" value="ECO:0007669"/>
    <property type="project" value="UniProtKB-UniRule"/>
</dbReference>
<dbReference type="FunFam" id="3.40.50.150:FF:000005">
    <property type="entry name" value="Ribosomal RNA large subunit methyltransferase E"/>
    <property type="match status" value="1"/>
</dbReference>
<dbReference type="Gene3D" id="3.40.50.150">
    <property type="entry name" value="Vaccinia Virus protein VP39"/>
    <property type="match status" value="1"/>
</dbReference>
<dbReference type="HAMAP" id="MF_01547">
    <property type="entry name" value="RNA_methyltr_E"/>
    <property type="match status" value="1"/>
</dbReference>
<dbReference type="InterPro" id="IPR050082">
    <property type="entry name" value="RNA_methyltr_RlmE"/>
</dbReference>
<dbReference type="InterPro" id="IPR002877">
    <property type="entry name" value="RNA_MeTrfase_FtsJ_dom"/>
</dbReference>
<dbReference type="InterPro" id="IPR015507">
    <property type="entry name" value="rRNA-MeTfrase_E"/>
</dbReference>
<dbReference type="InterPro" id="IPR029063">
    <property type="entry name" value="SAM-dependent_MTases_sf"/>
</dbReference>
<dbReference type="PANTHER" id="PTHR10920">
    <property type="entry name" value="RIBOSOMAL RNA METHYLTRANSFERASE"/>
    <property type="match status" value="1"/>
</dbReference>
<dbReference type="PANTHER" id="PTHR10920:SF18">
    <property type="entry name" value="RRNA METHYLTRANSFERASE 2, MITOCHONDRIAL"/>
    <property type="match status" value="1"/>
</dbReference>
<dbReference type="Pfam" id="PF01728">
    <property type="entry name" value="FtsJ"/>
    <property type="match status" value="1"/>
</dbReference>
<dbReference type="PIRSF" id="PIRSF005461">
    <property type="entry name" value="23S_rRNA_mtase"/>
    <property type="match status" value="1"/>
</dbReference>
<dbReference type="SUPFAM" id="SSF53335">
    <property type="entry name" value="S-adenosyl-L-methionine-dependent methyltransferases"/>
    <property type="match status" value="1"/>
</dbReference>
<comment type="function">
    <text evidence="1">Specifically methylates the uridine in position 2552 of 23S rRNA at the 2'-O position of the ribose in the fully assembled 50S ribosomal subunit.</text>
</comment>
<comment type="catalytic activity">
    <reaction evidence="1">
        <text>uridine(2552) in 23S rRNA + S-adenosyl-L-methionine = 2'-O-methyluridine(2552) in 23S rRNA + S-adenosyl-L-homocysteine + H(+)</text>
        <dbReference type="Rhea" id="RHEA:42720"/>
        <dbReference type="Rhea" id="RHEA-COMP:10202"/>
        <dbReference type="Rhea" id="RHEA-COMP:10203"/>
        <dbReference type="ChEBI" id="CHEBI:15378"/>
        <dbReference type="ChEBI" id="CHEBI:57856"/>
        <dbReference type="ChEBI" id="CHEBI:59789"/>
        <dbReference type="ChEBI" id="CHEBI:65315"/>
        <dbReference type="ChEBI" id="CHEBI:74478"/>
        <dbReference type="EC" id="2.1.1.166"/>
    </reaction>
</comment>
<comment type="subcellular location">
    <subcellularLocation>
        <location evidence="1">Cytoplasm</location>
    </subcellularLocation>
</comment>
<comment type="similarity">
    <text evidence="1">Belongs to the class I-like SAM-binding methyltransferase superfamily. RNA methyltransferase RlmE family.</text>
</comment>
<feature type="chain" id="PRO_1000087688" description="Ribosomal RNA large subunit methyltransferase E">
    <location>
        <begin position="1"/>
        <end position="214"/>
    </location>
</feature>
<feature type="active site" description="Proton acceptor" evidence="1">
    <location>
        <position position="167"/>
    </location>
</feature>
<feature type="binding site" evidence="1">
    <location>
        <position position="60"/>
    </location>
    <ligand>
        <name>S-adenosyl-L-methionine</name>
        <dbReference type="ChEBI" id="CHEBI:59789"/>
    </ligand>
</feature>
<feature type="binding site" evidence="1">
    <location>
        <position position="62"/>
    </location>
    <ligand>
        <name>S-adenosyl-L-methionine</name>
        <dbReference type="ChEBI" id="CHEBI:59789"/>
    </ligand>
</feature>
<feature type="binding site" evidence="1">
    <location>
        <position position="86"/>
    </location>
    <ligand>
        <name>S-adenosyl-L-methionine</name>
        <dbReference type="ChEBI" id="CHEBI:59789"/>
    </ligand>
</feature>
<feature type="binding site" evidence="1">
    <location>
        <position position="102"/>
    </location>
    <ligand>
        <name>S-adenosyl-L-methionine</name>
        <dbReference type="ChEBI" id="CHEBI:59789"/>
    </ligand>
</feature>
<feature type="binding site" evidence="1">
    <location>
        <position position="127"/>
    </location>
    <ligand>
        <name>S-adenosyl-L-methionine</name>
        <dbReference type="ChEBI" id="CHEBI:59789"/>
    </ligand>
</feature>
<gene>
    <name evidence="1" type="primary">rlmE</name>
    <name evidence="1" type="synonym">ftsJ</name>
    <name evidence="1" type="synonym">rrmJ</name>
    <name type="ordered locus">mma_2238</name>
</gene>
<reference key="1">
    <citation type="journal article" date="2007" name="PLoS Genet.">
        <title>Genome analysis of Minibacterium massiliensis highlights the convergent evolution of water-living bacteria.</title>
        <authorList>
            <person name="Audic S."/>
            <person name="Robert C."/>
            <person name="Campagna B."/>
            <person name="Parinello H."/>
            <person name="Claverie J.-M."/>
            <person name="Raoult D."/>
            <person name="Drancourt M."/>
        </authorList>
    </citation>
    <scope>NUCLEOTIDE SEQUENCE [LARGE SCALE GENOMIC DNA]</scope>
    <source>
        <strain>Marseille</strain>
    </source>
</reference>
<accession>A6T081</accession>
<organism>
    <name type="scientific">Janthinobacterium sp. (strain Marseille)</name>
    <name type="common">Minibacterium massiliensis</name>
    <dbReference type="NCBI Taxonomy" id="375286"/>
    <lineage>
        <taxon>Bacteria</taxon>
        <taxon>Pseudomonadati</taxon>
        <taxon>Pseudomonadota</taxon>
        <taxon>Betaproteobacteria</taxon>
        <taxon>Burkholderiales</taxon>
        <taxon>Oxalobacteraceae</taxon>
        <taxon>Janthinobacterium</taxon>
    </lineage>
</organism>
<keyword id="KW-0963">Cytoplasm</keyword>
<keyword id="KW-0489">Methyltransferase</keyword>
<keyword id="KW-0698">rRNA processing</keyword>
<keyword id="KW-0949">S-adenosyl-L-methionine</keyword>
<keyword id="KW-0808">Transferase</keyword>
<sequence>MAKNKLNKNWLHDHINDPYVKLAQKEGYRARAVYKLKEIDETEKLIKPGQIIVDLGATPGSWSQYVRNKLSGSVGGGINGTIIGLDMLPMEPIADVHFIQGDFREQEVLEQLEQVLQGRKVDLVISDMAPNLSGIAVADAARMIDLIDLAIDFTQHHMKPSGSLLVKCFNGSGYSYIVEKFRDEFKTVVQKKPKASRDKSSEIFLLGKTLKNPL</sequence>
<protein>
    <recommendedName>
        <fullName evidence="1">Ribosomal RNA large subunit methyltransferase E</fullName>
        <ecNumber evidence="1">2.1.1.166</ecNumber>
    </recommendedName>
    <alternativeName>
        <fullName evidence="1">23S rRNA Um2552 methyltransferase</fullName>
    </alternativeName>
    <alternativeName>
        <fullName evidence="1">rRNA (uridine-2'-O-)-methyltransferase</fullName>
    </alternativeName>
</protein>
<name>RLME_JANMA</name>
<proteinExistence type="inferred from homology"/>
<evidence type="ECO:0000255" key="1">
    <source>
        <dbReference type="HAMAP-Rule" id="MF_01547"/>
    </source>
</evidence>